<accession>P46081</accession>
<comment type="function">
    <text evidence="1">Assembles with botulinum neurotoxin type C (BoNT/C) and protects it against pH-mediated inactivation or protease activity at pH 2.6 (the pH of the animal gastrointestinal tract) but not at pH 6.0. The non-toxic component is necessary to maintain toxicity.</text>
</comment>
<comment type="subunit">
    <text evidence="1 2 3 5">Forms a highly interlocked heterodimer with botulinum neurotoxin type C at pH 6.0 but not at pH 7.5 (By similarity). Botulinum toxins are produced as progenitor toxins of large molecular sizes of 12S (M toxin) and 16S (L toxin). M toxin consists of a non-toxic, non-hemagglutinin component (NTNHA) and the neurotoxin (Probable). L toxin consists of the M toxin and the 3 subcomponents of hemagglutinin (HA) (PubMed:7802661). HA is composed of subcomponents of 70, 33, and 17 kDa (PubMed:7802661). The 70 kDa subcomponent undergoes proteolytic processing and is split into HA-55 and HA-22-23 (PubMed:7802661). The stoichiometry of the whole complex has been modeled as one BoNT/C, one NTNHA, three HA-70, six HA-33 and three HA-17 (By similarity).</text>
</comment>
<comment type="subcellular location">
    <subcellularLocation>
        <location evidence="3">Secreted</location>
    </subcellularLocation>
</comment>
<comment type="domain">
    <text evidence="2">Has 3 domains that are structurally very similar to those in BoNT/C; light chain (nLC, equivalent to the light chain), N-heavy chain (nHN) and C-heavy chain (nHC).</text>
</comment>
<comment type="miscellaneous">
    <text evidence="4">This protein can also be encoded on a prophage.</text>
</comment>
<comment type="similarity">
    <text evidence="4">Belongs to the botulism non-toxic nonhemagglutinin family.</text>
</comment>
<proteinExistence type="evidence at protein level"/>
<reference key="1">
    <citation type="journal article" date="1992" name="Biochem. Biophys. Res. Commun.">
        <title>The complete nucleotide sequence of the gene coding for the nontoxic-nonhemagglutinin component of Clostridium botulinum type C progenitor toxin.</title>
        <authorList>
            <person name="Tsuzuki K."/>
            <person name="Kimura K."/>
            <person name="Fujii N."/>
            <person name="Yokosawa N."/>
            <person name="Oguma K."/>
        </authorList>
    </citation>
    <scope>NUCLEOTIDE SEQUENCE [GENOMIC DNA]</scope>
    <source>
        <strain>Stockholm / Type C</strain>
    </source>
</reference>
<reference key="2">
    <citation type="journal article" date="1994" name="Biochem. Biophys. Res. Commun.">
        <title>Molecular construction of Clostridium botulinum type C progenitor toxin and its gene organization.</title>
        <authorList>
            <person name="Fujinaga Y."/>
            <person name="Inoue K."/>
            <person name="Shimazaki S."/>
            <person name="Tomochika K."/>
            <person name="Tsuzuki K."/>
            <person name="Fujii N."/>
            <person name="Watanabe T."/>
            <person name="Ohyama T."/>
            <person name="Takeshi K."/>
            <person name="Inoue K."/>
            <person name="Oguma K."/>
        </authorList>
    </citation>
    <scope>SUBUNIT</scope>
    <scope>SUBCELLULAR LOCATION</scope>
    <source>
        <strain>Stockholm / Type C / phage C-ST</strain>
    </source>
</reference>
<sequence>MDINDDLNINSPVDNKNVVIVRARKTNTFFKAFKVAPNIWVAPERYYGEPLDIAEEYKLDGGIYDSNFLSQDSERENFLQAIIILLKRINNTISGKQLLSLISTAIPFPYGYIGGGYSSPNIFTFGKTPKSNKKLNSLVTSTIPFPFGGYRETNYIESQNNKNFYASNIIIFGPGSNIVENNVIYYKKNDAENGMGTMAEIVFQPLLTYKYNKFYIDPAMELTKCLIKSLYFLYGIKPSDNLVVPYRLRTELDNKQFSQLNIIDLLISGGVDLEFINTNPYWFTNSYFPNSIKMFEKYKNIYKTEIEGNNAIGNDIKLRLKQKFQINVQDIWNLNLNYFCQSFNSIIPDRFSNALKHFYRKQYYTMDYTDNYNINGFVNGQINTKLPLSNKNTNIISKPEKVVNLVNENNISLMKSNIYGDGLKGTTEDFYSTYKIPYNEEYEYRFNDSDNFPLNNISIEEVDSIPEIIDINPYKDNSDNLVFTQITSMTEEVTTHTALSINYLQAQITNNENFTLSSDFSKVVSSKDKSLVYSFLDNLMSYLETIKNDGPIDTDKKYYLWLKEVFKNYSFDINLTQEIDSMCGINEVVLWFGKALNILNTSNSFVEEYQDSGAISLISKKDNLREPNIEIDDISDSLLGLSFKDLNNKLYEIYSKNIVYFKKIYFSFLDQWWTEYYSQYFELICMAKQSILAQESLVKQIVQNKFTDLSKASIPPDTLKLIRETTEKTFIDLSNESQISMNRVDNFLNKASICVFVEDIYPKFISYMEKYINNINIKTREFIQRCTNINDNEKSILINSYTFKTIDFKFLDIQSIKNFFNSQVEQVMKEILSPYQLLLFASKGPNSNIIEDISGKNTLIQYTESIELVYGVNGESLYLKSPNETIKFSNKFFTNGLTNNFTICFWLRFTGKNDDKTRLIGNKVNNCGWEIYFEDNGLVFEIIDSNGNQESVYLSNIINDNWYYISISVDRLKDQLLIFINDKNVANVSIDQILSIYSTNIISLVNKNNSIYVEELSVLDNPITSEEVIRNYFSYLDNSYIRDSSKSLLEYNKNYQLYNYVFPETSLYEVNDNNKSYLSLKNTDGINISSVKFKLINIDESKVYVQKWDECIICVLDGTEKYLDISPENNRIQLVSSKDNAKKITVNTDLFRPDCITFSYNDKYFSLSLRDGDYNWMICNDNNKVPKGAHLWILES</sequence>
<feature type="chain" id="PRO_0000065028" description="Non-toxic nonhemagglutinin type C">
    <location>
        <begin position="1"/>
        <end position="1196"/>
    </location>
</feature>
<feature type="region of interest" description="Light chain nLC" evidence="2">
    <location>
        <begin position="1"/>
        <end position="408"/>
    </location>
</feature>
<feature type="region of interest" description="N-heavy chain nHN" evidence="2">
    <location>
        <begin position="409"/>
        <end position="828"/>
    </location>
</feature>
<feature type="region of interest" description="C-heavy chain nHC" evidence="2">
    <location>
        <begin position="829"/>
        <end position="1195"/>
    </location>
</feature>
<organismHost>
    <name type="scientific">Clostridium botulinum C</name>
    <dbReference type="NCBI Taxonomy" id="36828"/>
</organismHost>
<protein>
    <recommendedName>
        <fullName>Non-toxic nonhemagglutinin type C</fullName>
        <shortName>NTNHA</shortName>
    </recommendedName>
    <alternativeName>
        <fullName>ANTP139</fullName>
    </alternativeName>
    <alternativeName>
        <fullName>Botulinum neurotoxin type C non-toxic component</fullName>
    </alternativeName>
    <alternativeName>
        <fullName>Botulinum neurotoxin type C1 non-toxic component</fullName>
    </alternativeName>
</protein>
<keyword id="KW-0964">Secreted</keyword>
<keyword id="KW-0843">Virulence</keyword>
<name>BXCN_CBCP</name>
<organism>
    <name type="scientific">Clostridium botulinum C phage</name>
    <name type="common">Clostridium botulinum C bacteriophage</name>
    <dbReference type="NCBI Taxonomy" id="12336"/>
    <lineage>
        <taxon>Viruses</taxon>
        <taxon>Duplodnaviria</taxon>
        <taxon>Heunggongvirae</taxon>
        <taxon>Uroviricota</taxon>
        <taxon>Caudoviricetes</taxon>
    </lineage>
</organism>
<evidence type="ECO:0000250" key="1">
    <source>
        <dbReference type="UniProtKB" id="Q45914"/>
    </source>
</evidence>
<evidence type="ECO:0000250" key="2">
    <source>
        <dbReference type="UniProtKB" id="Q9LBR2"/>
    </source>
</evidence>
<evidence type="ECO:0000269" key="3">
    <source>
    </source>
</evidence>
<evidence type="ECO:0000305" key="4"/>
<evidence type="ECO:0000305" key="5">
    <source>
    </source>
</evidence>
<dbReference type="EMBL" id="X62389">
    <property type="protein sequence ID" value="CAA44262.1"/>
    <property type="molecule type" value="Genomic_DNA"/>
</dbReference>
<dbReference type="RefSeq" id="YP_398515.1">
    <property type="nucleotide sequence ID" value="NC_007581.1"/>
</dbReference>
<dbReference type="SMR" id="P46081"/>
<dbReference type="TCDB" id="1.C.8.1.4">
    <property type="family name" value="the botulinum and tetanus toxin (btt) family"/>
</dbReference>
<dbReference type="GeneID" id="3772940"/>
<dbReference type="KEGG" id="vg:3772940"/>
<dbReference type="GO" id="GO:0005576">
    <property type="term" value="C:extracellular region"/>
    <property type="evidence" value="ECO:0007669"/>
    <property type="project" value="UniProtKB-SubCell"/>
</dbReference>
<dbReference type="GO" id="GO:0004222">
    <property type="term" value="F:metalloendopeptidase activity"/>
    <property type="evidence" value="ECO:0007669"/>
    <property type="project" value="InterPro"/>
</dbReference>
<dbReference type="GO" id="GO:0008270">
    <property type="term" value="F:zinc ion binding"/>
    <property type="evidence" value="ECO:0007669"/>
    <property type="project" value="InterPro"/>
</dbReference>
<dbReference type="GO" id="GO:0006508">
    <property type="term" value="P:proteolysis"/>
    <property type="evidence" value="ECO:0007669"/>
    <property type="project" value="InterPro"/>
</dbReference>
<dbReference type="Gene3D" id="2.60.120.200">
    <property type="match status" value="1"/>
</dbReference>
<dbReference type="Gene3D" id="2.80.10.50">
    <property type="match status" value="1"/>
</dbReference>
<dbReference type="Gene3D" id="1.20.1120.10">
    <property type="entry name" value="Clostridium botulinum neurotoxin b, 'coiled-coil' domain"/>
    <property type="match status" value="1"/>
</dbReference>
<dbReference type="Gene3D" id="3.90.1240.10">
    <property type="entry name" value="Metalloproteases ('zincins'), catalytic domain like"/>
    <property type="match status" value="2"/>
</dbReference>
<dbReference type="InterPro" id="IPR000395">
    <property type="entry name" value="Bot/tetX_LC"/>
</dbReference>
<dbReference type="InterPro" id="IPR036248">
    <property type="entry name" value="Clostridium_toxin_transloc"/>
</dbReference>
<dbReference type="InterPro" id="IPR013320">
    <property type="entry name" value="ConA-like_dom_sf"/>
</dbReference>
<dbReference type="InterPro" id="IPR013677">
    <property type="entry name" value="Nontoxic_nonhemagglutn_C"/>
</dbReference>
<dbReference type="InterPro" id="IPR012928">
    <property type="entry name" value="Toxin_rcpt-bd_N"/>
</dbReference>
<dbReference type="NCBIfam" id="NF033911">
    <property type="entry name" value="botu_NTNH"/>
    <property type="match status" value="1"/>
</dbReference>
<dbReference type="Pfam" id="PF08470">
    <property type="entry name" value="NTNH_C"/>
    <property type="match status" value="1"/>
</dbReference>
<dbReference type="Pfam" id="PF01742">
    <property type="entry name" value="Peptidase_M27"/>
    <property type="match status" value="1"/>
</dbReference>
<dbReference type="Pfam" id="PF22133">
    <property type="entry name" value="Toxin_BN_H"/>
    <property type="match status" value="1"/>
</dbReference>
<dbReference type="Pfam" id="PF07953">
    <property type="entry name" value="Toxin_R_bind_N"/>
    <property type="match status" value="1"/>
</dbReference>
<dbReference type="PRINTS" id="PR00760">
    <property type="entry name" value="BONTOXILYSIN"/>
</dbReference>
<dbReference type="SUPFAM" id="SSF58091">
    <property type="entry name" value="Clostridium neurotoxins, 'coiled-coil' domain"/>
    <property type="match status" value="1"/>
</dbReference>
<dbReference type="SUPFAM" id="SSF49899">
    <property type="entry name" value="Concanavalin A-like lectins/glucanases"/>
    <property type="match status" value="1"/>
</dbReference>
<dbReference type="SUPFAM" id="SSF55486">
    <property type="entry name" value="Metalloproteases ('zincins'), catalytic domain"/>
    <property type="match status" value="1"/>
</dbReference>